<feature type="chain" id="PRO_1000138933" description="Deoxyguanosinetriphosphate triphosphohydrolase-like protein">
    <location>
        <begin position="1"/>
        <end position="446"/>
    </location>
</feature>
<feature type="domain" description="HD" evidence="2">
    <location>
        <begin position="59"/>
        <end position="252"/>
    </location>
</feature>
<feature type="region of interest" description="Disordered" evidence="3">
    <location>
        <begin position="1"/>
        <end position="28"/>
    </location>
</feature>
<feature type="compositionally biased region" description="Basic and acidic residues" evidence="3">
    <location>
        <begin position="7"/>
        <end position="28"/>
    </location>
</feature>
<reference key="1">
    <citation type="submission" date="2006-08" db="EMBL/GenBank/DDBJ databases">
        <title>Complete sequence of Shewanella sp. MR-4.</title>
        <authorList>
            <consortium name="US DOE Joint Genome Institute"/>
            <person name="Copeland A."/>
            <person name="Lucas S."/>
            <person name="Lapidus A."/>
            <person name="Barry K."/>
            <person name="Detter J.C."/>
            <person name="Glavina del Rio T."/>
            <person name="Hammon N."/>
            <person name="Israni S."/>
            <person name="Dalin E."/>
            <person name="Tice H."/>
            <person name="Pitluck S."/>
            <person name="Kiss H."/>
            <person name="Brettin T."/>
            <person name="Bruce D."/>
            <person name="Han C."/>
            <person name="Tapia R."/>
            <person name="Gilna P."/>
            <person name="Schmutz J."/>
            <person name="Larimer F."/>
            <person name="Land M."/>
            <person name="Hauser L."/>
            <person name="Kyrpides N."/>
            <person name="Mikhailova N."/>
            <person name="Nealson K."/>
            <person name="Konstantinidis K."/>
            <person name="Klappenbach J."/>
            <person name="Tiedje J."/>
            <person name="Richardson P."/>
        </authorList>
    </citation>
    <scope>NUCLEOTIDE SEQUENCE [LARGE SCALE GENOMIC DNA]</scope>
    <source>
        <strain>MR-4</strain>
    </source>
</reference>
<sequence length="446" mass="50726">MSSSVWQERRHGEDKQRRNDHRSPFQRDRARILHSAAFRRLQAKTQVLGVGMNDFYRTRLTHSLEVSQIGTGIAAQLSRKYPEHKPLLGSMSLLESLCLAHDIGHPPFGHGGEVALNYMMRHHGGFEGNGQTFRILSKLEPYTEAFGMNLCRRTMLGILKYPAPQSLLFVPGSHPEITNHRQLKPSQWPPVKGIFDDDSDIFDWVLEPLSVADRARFTSVQPSLQPNYPHLRTQFKSFDCSIMELADDIAYAVHDLEDAIVMGIVTASQWQQDVAPTLKHSGDPWIRQELADIGTKLFSHEHHLRKDAIGTLVNGFVTAIIINDDPAFEEPLLRFNASLEPEFANALNVLKQLVFKYVIRKPEIQMLEYKGQQIVMGLFEAFASDPERLLPLNTQERWRTSELQGQNSHRVLADYISGMTDEFAGRLYQQLFSPKAGSNVELSKEM</sequence>
<organism>
    <name type="scientific">Shewanella sp. (strain MR-4)</name>
    <dbReference type="NCBI Taxonomy" id="60480"/>
    <lineage>
        <taxon>Bacteria</taxon>
        <taxon>Pseudomonadati</taxon>
        <taxon>Pseudomonadota</taxon>
        <taxon>Gammaproteobacteria</taxon>
        <taxon>Alteromonadales</taxon>
        <taxon>Shewanellaceae</taxon>
        <taxon>Shewanella</taxon>
    </lineage>
</organism>
<evidence type="ECO:0000255" key="1">
    <source>
        <dbReference type="HAMAP-Rule" id="MF_01212"/>
    </source>
</evidence>
<evidence type="ECO:0000255" key="2">
    <source>
        <dbReference type="PROSITE-ProRule" id="PRU01175"/>
    </source>
</evidence>
<evidence type="ECO:0000256" key="3">
    <source>
        <dbReference type="SAM" id="MobiDB-lite"/>
    </source>
</evidence>
<dbReference type="EMBL" id="CP000446">
    <property type="protein sequence ID" value="ABI39115.1"/>
    <property type="molecule type" value="Genomic_DNA"/>
</dbReference>
<dbReference type="RefSeq" id="WP_011622805.1">
    <property type="nucleotide sequence ID" value="NC_008321.1"/>
</dbReference>
<dbReference type="SMR" id="Q0HIK2"/>
<dbReference type="KEGG" id="she:Shewmr4_2042"/>
<dbReference type="HOGENOM" id="CLU_028163_0_0_6"/>
<dbReference type="GO" id="GO:0008832">
    <property type="term" value="F:dGTPase activity"/>
    <property type="evidence" value="ECO:0007669"/>
    <property type="project" value="TreeGrafter"/>
</dbReference>
<dbReference type="GO" id="GO:0006203">
    <property type="term" value="P:dGTP catabolic process"/>
    <property type="evidence" value="ECO:0007669"/>
    <property type="project" value="TreeGrafter"/>
</dbReference>
<dbReference type="CDD" id="cd00077">
    <property type="entry name" value="HDc"/>
    <property type="match status" value="1"/>
</dbReference>
<dbReference type="FunFam" id="1.10.3210.10:FF:000063">
    <property type="entry name" value="Deoxyguanosinetriphosphate triphosphohydrolase-like protein"/>
    <property type="match status" value="1"/>
</dbReference>
<dbReference type="Gene3D" id="1.10.3210.10">
    <property type="entry name" value="Hypothetical protein af1432"/>
    <property type="match status" value="2"/>
</dbReference>
<dbReference type="HAMAP" id="MF_01212">
    <property type="entry name" value="dGTPase_type2"/>
    <property type="match status" value="1"/>
</dbReference>
<dbReference type="InterPro" id="IPR006261">
    <property type="entry name" value="dGTPase"/>
</dbReference>
<dbReference type="InterPro" id="IPR050135">
    <property type="entry name" value="dGTPase-like"/>
</dbReference>
<dbReference type="InterPro" id="IPR023023">
    <property type="entry name" value="dNTPase_2"/>
</dbReference>
<dbReference type="InterPro" id="IPR003607">
    <property type="entry name" value="HD/PDEase_dom"/>
</dbReference>
<dbReference type="InterPro" id="IPR006674">
    <property type="entry name" value="HD_domain"/>
</dbReference>
<dbReference type="InterPro" id="IPR026875">
    <property type="entry name" value="PHydrolase_assoc_dom"/>
</dbReference>
<dbReference type="NCBIfam" id="NF041026">
    <property type="entry name" value="antiphage_dGTPase"/>
    <property type="match status" value="1"/>
</dbReference>
<dbReference type="NCBIfam" id="TIGR01353">
    <property type="entry name" value="dGTP_triPase"/>
    <property type="match status" value="1"/>
</dbReference>
<dbReference type="NCBIfam" id="NF003701">
    <property type="entry name" value="PRK05318.1"/>
    <property type="match status" value="1"/>
</dbReference>
<dbReference type="PANTHER" id="PTHR11373:SF40">
    <property type="entry name" value="DEOXYGUANOSINETRIPHOSPHATE TRIPHOSPHOHYDROLASE-LIKE PROTEIN 2"/>
    <property type="match status" value="1"/>
</dbReference>
<dbReference type="PANTHER" id="PTHR11373">
    <property type="entry name" value="DEOXYNUCLEOSIDE TRIPHOSPHATE TRIPHOSPHOHYDROLASE"/>
    <property type="match status" value="1"/>
</dbReference>
<dbReference type="Pfam" id="PF01966">
    <property type="entry name" value="HD"/>
    <property type="match status" value="1"/>
</dbReference>
<dbReference type="Pfam" id="PF13286">
    <property type="entry name" value="HD_assoc"/>
    <property type="match status" value="1"/>
</dbReference>
<dbReference type="SMART" id="SM00471">
    <property type="entry name" value="HDc"/>
    <property type="match status" value="1"/>
</dbReference>
<dbReference type="SUPFAM" id="SSF109604">
    <property type="entry name" value="HD-domain/PDEase-like"/>
    <property type="match status" value="1"/>
</dbReference>
<dbReference type="PROSITE" id="PS51831">
    <property type="entry name" value="HD"/>
    <property type="match status" value="1"/>
</dbReference>
<proteinExistence type="inferred from homology"/>
<gene>
    <name type="ordered locus">Shewmr4_2042</name>
</gene>
<name>DGTL1_SHESM</name>
<accession>Q0HIK2</accession>
<keyword id="KW-0378">Hydrolase</keyword>
<protein>
    <recommendedName>
        <fullName evidence="1">Deoxyguanosinetriphosphate triphosphohydrolase-like protein</fullName>
    </recommendedName>
</protein>
<comment type="similarity">
    <text evidence="1">Belongs to the dGTPase family. Type 2 subfamily.</text>
</comment>